<reference key="1">
    <citation type="journal article" date="1994" name="Yeast">
        <title>Identification of a set of yeast genes coding for a novel family of putative ATPases with high similarity to constituents of the 26S protease complex.</title>
        <authorList>
            <person name="Schnall R."/>
            <person name="Mannhaupt G."/>
            <person name="Stucka R."/>
            <person name="Tauer R."/>
            <person name="Ehnle S."/>
            <person name="Schwarzlose C."/>
            <person name="Vetter I."/>
            <person name="Feldmann H."/>
        </authorList>
    </citation>
    <scope>NUCLEOTIDE SEQUENCE [GENOMIC DNA]</scope>
    <source>
        <strain>C836</strain>
    </source>
</reference>
<reference key="2">
    <citation type="submission" date="1996-04" db="EMBL/GenBank/DDBJ databases">
        <authorList>
            <person name="Feldmann H."/>
        </authorList>
    </citation>
    <scope>SEQUENCE REVISION</scope>
</reference>
<reference key="3">
    <citation type="journal article" date="1998" name="Yeast">
        <title>A 9359 bp fragment from the right arm of Saccharomyces cerevisiae chromosome VII includes the FOL2 and YTA7 genes and three unknown open reading frames.</title>
        <authorList>
            <person name="Agostoni Carbone M.L."/>
            <person name="Lucchini G."/>
            <person name="Melchioretto P."/>
            <person name="Nardese V."/>
            <person name="Vanoni M."/>
            <person name="Panzeri L."/>
        </authorList>
    </citation>
    <scope>NUCLEOTIDE SEQUENCE [GENOMIC DNA]</scope>
    <source>
        <strain>ATCC 96604 / S288c / FY1679</strain>
    </source>
</reference>
<reference key="4">
    <citation type="journal article" date="1997" name="Nature">
        <title>The nucleotide sequence of Saccharomyces cerevisiae chromosome VII.</title>
        <authorList>
            <person name="Tettelin H."/>
            <person name="Agostoni-Carbone M.L."/>
            <person name="Albermann K."/>
            <person name="Albers M."/>
            <person name="Arroyo J."/>
            <person name="Backes U."/>
            <person name="Barreiros T."/>
            <person name="Bertani I."/>
            <person name="Bjourson A.J."/>
            <person name="Brueckner M."/>
            <person name="Bruschi C.V."/>
            <person name="Carignani G."/>
            <person name="Castagnoli L."/>
            <person name="Cerdan E."/>
            <person name="Clemente M.L."/>
            <person name="Coblenz A."/>
            <person name="Coglievina M."/>
            <person name="Coissac E."/>
            <person name="Defoor E."/>
            <person name="Del Bino S."/>
            <person name="Delius H."/>
            <person name="Delneri D."/>
            <person name="de Wergifosse P."/>
            <person name="Dujon B."/>
            <person name="Durand P."/>
            <person name="Entian K.-D."/>
            <person name="Eraso P."/>
            <person name="Escribano V."/>
            <person name="Fabiani L."/>
            <person name="Fartmann B."/>
            <person name="Feroli F."/>
            <person name="Feuermann M."/>
            <person name="Frontali L."/>
            <person name="Garcia-Gonzalez M."/>
            <person name="Garcia-Saez M.I."/>
            <person name="Goffeau A."/>
            <person name="Guerreiro P."/>
            <person name="Hani J."/>
            <person name="Hansen M."/>
            <person name="Hebling U."/>
            <person name="Hernandez K."/>
            <person name="Heumann K."/>
            <person name="Hilger F."/>
            <person name="Hofmann B."/>
            <person name="Indge K.J."/>
            <person name="James C.M."/>
            <person name="Klima R."/>
            <person name="Koetter P."/>
            <person name="Kramer B."/>
            <person name="Kramer W."/>
            <person name="Lauquin G."/>
            <person name="Leuther H."/>
            <person name="Louis E.J."/>
            <person name="Maillier E."/>
            <person name="Marconi A."/>
            <person name="Martegani E."/>
            <person name="Mazon M.J."/>
            <person name="Mazzoni C."/>
            <person name="McReynolds A.D.K."/>
            <person name="Melchioretto P."/>
            <person name="Mewes H.-W."/>
            <person name="Minenkova O."/>
            <person name="Mueller-Auer S."/>
            <person name="Nawrocki A."/>
            <person name="Netter P."/>
            <person name="Neu R."/>
            <person name="Nombela C."/>
            <person name="Oliver S.G."/>
            <person name="Panzeri L."/>
            <person name="Paoluzi S."/>
            <person name="Plevani P."/>
            <person name="Portetelle D."/>
            <person name="Portillo F."/>
            <person name="Potier S."/>
            <person name="Purnelle B."/>
            <person name="Rieger M."/>
            <person name="Riles L."/>
            <person name="Rinaldi T."/>
            <person name="Robben J."/>
            <person name="Rodrigues-Pousada C."/>
            <person name="Rodriguez-Belmonte E."/>
            <person name="Rodriguez-Torres A.M."/>
            <person name="Rose M."/>
            <person name="Ruzzi M."/>
            <person name="Saliola M."/>
            <person name="Sanchez-Perez M."/>
            <person name="Schaefer B."/>
            <person name="Schaefer M."/>
            <person name="Scharfe M."/>
            <person name="Schmidheini T."/>
            <person name="Schreer A."/>
            <person name="Skala J."/>
            <person name="Souciet J.-L."/>
            <person name="Steensma H.Y."/>
            <person name="Talla E."/>
            <person name="Thierry A."/>
            <person name="Vandenbol M."/>
            <person name="van der Aart Q.J.M."/>
            <person name="Van Dyck L."/>
            <person name="Vanoni M."/>
            <person name="Verhasselt P."/>
            <person name="Voet M."/>
            <person name="Volckaert G."/>
            <person name="Wambutt R."/>
            <person name="Watson M.D."/>
            <person name="Weber N."/>
            <person name="Wedler E."/>
            <person name="Wedler H."/>
            <person name="Wipfli P."/>
            <person name="Wolf K."/>
            <person name="Wright L.F."/>
            <person name="Zaccaria P."/>
            <person name="Zimmermann M."/>
            <person name="Zollner A."/>
            <person name="Kleine K."/>
        </authorList>
    </citation>
    <scope>NUCLEOTIDE SEQUENCE [LARGE SCALE GENOMIC DNA]</scope>
    <source>
        <strain>ATCC 204508 / S288c</strain>
    </source>
</reference>
<reference key="5">
    <citation type="journal article" date="2014" name="G3 (Bethesda)">
        <title>The reference genome sequence of Saccharomyces cerevisiae: Then and now.</title>
        <authorList>
            <person name="Engel S.R."/>
            <person name="Dietrich F.S."/>
            <person name="Fisk D.G."/>
            <person name="Binkley G."/>
            <person name="Balakrishnan R."/>
            <person name="Costanzo M.C."/>
            <person name="Dwight S.S."/>
            <person name="Hitz B.C."/>
            <person name="Karra K."/>
            <person name="Nash R.S."/>
            <person name="Weng S."/>
            <person name="Wong E.D."/>
            <person name="Lloyd P."/>
            <person name="Skrzypek M.S."/>
            <person name="Miyasato S.R."/>
            <person name="Simison M."/>
            <person name="Cherry J.M."/>
        </authorList>
    </citation>
    <scope>GENOME REANNOTATION</scope>
    <source>
        <strain>ATCC 204508 / S288c</strain>
    </source>
</reference>
<reference key="6">
    <citation type="journal article" date="2003" name="Nature">
        <title>Global analysis of protein expression in yeast.</title>
        <authorList>
            <person name="Ghaemmaghami S."/>
            <person name="Huh W.-K."/>
            <person name="Bower K."/>
            <person name="Howson R.W."/>
            <person name="Belle A."/>
            <person name="Dephoure N."/>
            <person name="O'Shea E.K."/>
            <person name="Weissman J.S."/>
        </authorList>
    </citation>
    <scope>LEVEL OF PROTEIN EXPRESSION [LARGE SCALE ANALYSIS]</scope>
</reference>
<reference key="7">
    <citation type="journal article" date="2005" name="Genetics">
        <title>Multiple bromodomain genes are involved in restricting the spread of heterochromatic silencing at the Saccharomyces cerevisiae HMR-tRNA boundary.</title>
        <authorList>
            <person name="Jambunathan N."/>
            <person name="Martinez A.W."/>
            <person name="Robert E.C."/>
            <person name="Agochukwu N.B."/>
            <person name="Ibos M.E."/>
            <person name="Dugas S.L."/>
            <person name="Donze D."/>
        </authorList>
    </citation>
    <scope>FUNCTION</scope>
    <scope>INTERACTION WITH HISTONES H3 AND H4</scope>
    <scope>DISRUPTION PHENOTYPE</scope>
</reference>
<reference key="8">
    <citation type="journal article" date="2007" name="J. Proteome Res.">
        <title>Large-scale phosphorylation analysis of alpha-factor-arrested Saccharomyces cerevisiae.</title>
        <authorList>
            <person name="Li X."/>
            <person name="Gerber S.A."/>
            <person name="Rudner A.D."/>
            <person name="Beausoleil S.A."/>
            <person name="Haas W."/>
            <person name="Villen J."/>
            <person name="Elias J.E."/>
            <person name="Gygi S.P."/>
        </authorList>
    </citation>
    <scope>PHOSPHORYLATION [LARGE SCALE ANALYSIS] AT SER-94 AND SER-259</scope>
    <scope>IDENTIFICATION BY MASS SPECTROMETRY [LARGE SCALE ANALYSIS]</scope>
    <source>
        <strain>ADR376</strain>
    </source>
</reference>
<reference key="9">
    <citation type="journal article" date="2007" name="Proc. Natl. Acad. Sci. U.S.A.">
        <title>Analysis of phosphorylation sites on proteins from Saccharomyces cerevisiae by electron transfer dissociation (ETD) mass spectrometry.</title>
        <authorList>
            <person name="Chi A."/>
            <person name="Huttenhower C."/>
            <person name="Geer L.Y."/>
            <person name="Coon J.J."/>
            <person name="Syka J.E.P."/>
            <person name="Bai D.L."/>
            <person name="Shabanowitz J."/>
            <person name="Burke D.J."/>
            <person name="Troyanskaya O.G."/>
            <person name="Hunt D.F."/>
        </authorList>
    </citation>
    <scope>ACETYLATION [LARGE SCALE ANALYSIS] AT ALA-2</scope>
    <scope>PHOSPHORYLATION [LARGE SCALE ANALYSIS] AT SER-11 AND SER-17</scope>
    <scope>CLEAVAGE OF INITIATOR METHIONINE [LARGE SCALE ANALYSIS]</scope>
    <scope>IDENTIFICATION BY MASS SPECTROMETRY [LARGE SCALE ANALYSIS]</scope>
</reference>
<reference key="10">
    <citation type="journal article" date="2008" name="Mol. Cell. Proteomics">
        <title>A multidimensional chromatography technology for in-depth phosphoproteome analysis.</title>
        <authorList>
            <person name="Albuquerque C.P."/>
            <person name="Smolka M.B."/>
            <person name="Payne S.H."/>
            <person name="Bafna V."/>
            <person name="Eng J."/>
            <person name="Zhou H."/>
        </authorList>
    </citation>
    <scope>PHOSPHORYLATION [LARGE SCALE ANALYSIS] AT SER-11; THR-212; SER-241; SER-259; SER-285; SER-1142 AND SER-1256</scope>
    <scope>IDENTIFICATION BY MASS SPECTROMETRY [LARGE SCALE ANALYSIS]</scope>
</reference>
<reference key="11">
    <citation type="journal article" date="2009" name="Mol. Cell">
        <title>Two-color cell array screen reveals interdependent roles for histone chaperones and a chromatin boundary regulator in histone gene repression.</title>
        <authorList>
            <person name="Fillingham J."/>
            <person name="Kainth P."/>
            <person name="Lambert J.P."/>
            <person name="van Bakel H."/>
            <person name="Tsui K."/>
            <person name="Pena-Castillo L."/>
            <person name="Nislow C."/>
            <person name="Figeys D."/>
            <person name="Hughes T.R."/>
            <person name="Greenblatt J."/>
            <person name="Andrews B.J."/>
        </authorList>
    </citation>
    <scope>FUNCTION</scope>
    <scope>SUBCELLULAR LOCATION</scope>
    <scope>DISRUPTION PHENOTYPE</scope>
</reference>
<reference key="12">
    <citation type="journal article" date="2009" name="Science">
        <title>Global analysis of Cdk1 substrate phosphorylation sites provides insights into evolution.</title>
        <authorList>
            <person name="Holt L.J."/>
            <person name="Tuch B.B."/>
            <person name="Villen J."/>
            <person name="Johnson A.D."/>
            <person name="Gygi S.P."/>
            <person name="Morgan D.O."/>
        </authorList>
    </citation>
    <scope>PHOSPHORYLATION [LARGE SCALE ANALYSIS] AT SER-11; THR-229; SER-259; SER-367; SER-369; SER-370; SER-735; SER-1142 AND SER-1256</scope>
    <scope>IDENTIFICATION BY MASS SPECTROMETRY [LARGE SCALE ANALYSIS]</scope>
</reference>
<reference key="13">
    <citation type="journal article" date="2011" name="Genes Dev.">
        <title>Restriction of histone gene transcription to S phase by phosphorylation of a chromatin boundary protein.</title>
        <authorList>
            <person name="Kurat C.F."/>
            <person name="Lambert J.P."/>
            <person name="van Dyk D."/>
            <person name="Tsui K."/>
            <person name="van Bakel H."/>
            <person name="Kaluarachchi S."/>
            <person name="Friesen H."/>
            <person name="Kainth P."/>
            <person name="Nislow C."/>
            <person name="Figeys D."/>
            <person name="Fillingham J."/>
            <person name="Andrews B.J."/>
        </authorList>
    </citation>
    <scope>FUNCTION</scope>
    <scope>INTERACTION WITH SPT16; CKA1; CKA2; CKB1; CKB2; POB3 AND RNA POLYMERASE II</scope>
    <scope>SUBCELLULAR LOCATION</scope>
    <scope>PHOSPHORYLATION</scope>
    <scope>DISRUPTION PHENOTYPE</scope>
    <scope>MUTAGENESIS OF SER-11; THR-67; SER-94; THR-212; SER-230; SER-241; SER-259; SER-285; SER-304; SER-369; SER-370; THR-380; THR-445 AND LYS-460</scope>
</reference>
<reference key="14">
    <citation type="journal article" date="2015" name="Genetics">
        <title>Maintenance of nucleosomal balance in cis by conserved AAA-ATPase Yta7.</title>
        <authorList>
            <person name="Lombardi L.M."/>
            <person name="Davis M.D."/>
            <person name="Rine J."/>
        </authorList>
    </citation>
    <scope>FUNCTION</scope>
    <scope>SUBCELLULAR LOCATION</scope>
    <scope>DISRUPTION PHENOTYPE</scope>
</reference>
<reference key="15">
    <citation type="journal article" date="2020" name="Proc. Natl. Acad. Sci. U.S.A.">
        <title>The ATAD2/ANCCA homolog Yta7 cooperates with Scm3HJURP to deposit Cse4CENP-A at the centromere in yeast.</title>
        <authorList>
            <person name="Shahnejat-Bushehri S."/>
            <person name="Ehrenhofer-Murray A.E."/>
        </authorList>
    </citation>
    <scope>FUNCTION</scope>
    <scope>INTERACTION WITH CSE4/CENP-A AND SCM3</scope>
    <scope>SUBCELLULAR LOCATION</scope>
    <scope>DISRUPTION PHENOTYPE</scope>
</reference>
<protein>
    <recommendedName>
        <fullName evidence="1">ATPase histone chaperone YTA7</fullName>
        <ecNumber evidence="10">3.6.1.-</ecNumber>
    </recommendedName>
    <alternativeName>
        <fullName evidence="12">ATPase family AAA domain-containing protein YTA7</fullName>
        <shortName evidence="12">AAA-ATPase</shortName>
    </alternativeName>
    <alternativeName>
        <fullName>Tat-binding homolog 7</fullName>
    </alternativeName>
</protein>
<evidence type="ECO:0000250" key="1">
    <source>
        <dbReference type="UniProtKB" id="O14114"/>
    </source>
</evidence>
<evidence type="ECO:0000255" key="2"/>
<evidence type="ECO:0000255" key="3">
    <source>
        <dbReference type="PROSITE-ProRule" id="PRU00035"/>
    </source>
</evidence>
<evidence type="ECO:0000256" key="4">
    <source>
        <dbReference type="SAM" id="MobiDB-lite"/>
    </source>
</evidence>
<evidence type="ECO:0000269" key="5">
    <source>
    </source>
</evidence>
<evidence type="ECO:0000269" key="6">
    <source>
    </source>
</evidence>
<evidence type="ECO:0000269" key="7">
    <source>
    </source>
</evidence>
<evidence type="ECO:0000269" key="8">
    <source>
    </source>
</evidence>
<evidence type="ECO:0000269" key="9">
    <source>
    </source>
</evidence>
<evidence type="ECO:0000269" key="10">
    <source>
    </source>
</evidence>
<evidence type="ECO:0000303" key="11">
    <source>
    </source>
</evidence>
<evidence type="ECO:0000305" key="12"/>
<evidence type="ECO:0000305" key="13">
    <source>
    </source>
</evidence>
<evidence type="ECO:0000312" key="14">
    <source>
        <dbReference type="SGD" id="S000003502"/>
    </source>
</evidence>
<evidence type="ECO:0007744" key="15">
    <source>
    </source>
</evidence>
<evidence type="ECO:0007744" key="16">
    <source>
    </source>
</evidence>
<evidence type="ECO:0007744" key="17">
    <source>
    </source>
</evidence>
<evidence type="ECO:0007744" key="18">
    <source>
    </source>
</evidence>
<evidence type="ECO:0007829" key="19">
    <source>
        <dbReference type="PDB" id="7UQJ"/>
    </source>
</evidence>
<evidence type="ECO:0007829" key="20">
    <source>
        <dbReference type="PDB" id="7UQK"/>
    </source>
</evidence>
<keyword id="KW-0002">3D-structure</keyword>
<keyword id="KW-0007">Acetylation</keyword>
<keyword id="KW-0067">ATP-binding</keyword>
<keyword id="KW-0103">Bromodomain</keyword>
<keyword id="KW-0137">Centromere</keyword>
<keyword id="KW-0158">Chromosome</keyword>
<keyword id="KW-0378">Hydrolase</keyword>
<keyword id="KW-0547">Nucleotide-binding</keyword>
<keyword id="KW-0539">Nucleus</keyword>
<keyword id="KW-0597">Phosphoprotein</keyword>
<keyword id="KW-1185">Reference proteome</keyword>
<gene>
    <name evidence="11" type="primary">YTA7</name>
    <name evidence="14" type="ordered locus">YGR270W</name>
</gene>
<proteinExistence type="evidence at protein level"/>
<organism>
    <name type="scientific">Saccharomyces cerevisiae (strain ATCC 204508 / S288c)</name>
    <name type="common">Baker's yeast</name>
    <dbReference type="NCBI Taxonomy" id="559292"/>
    <lineage>
        <taxon>Eukaryota</taxon>
        <taxon>Fungi</taxon>
        <taxon>Dikarya</taxon>
        <taxon>Ascomycota</taxon>
        <taxon>Saccharomycotina</taxon>
        <taxon>Saccharomycetes</taxon>
        <taxon>Saccharomycetales</taxon>
        <taxon>Saccharomycetaceae</taxon>
        <taxon>Saccharomyces</taxon>
    </lineage>
</organism>
<dbReference type="EC" id="3.6.1.-" evidence="10"/>
<dbReference type="EMBL" id="X81072">
    <property type="protein sequence ID" value="CAA56963.1"/>
    <property type="molecule type" value="Genomic_DNA"/>
</dbReference>
<dbReference type="EMBL" id="Y07893">
    <property type="protein sequence ID" value="CAA69201.1"/>
    <property type="molecule type" value="Genomic_DNA"/>
</dbReference>
<dbReference type="EMBL" id="Z73055">
    <property type="protein sequence ID" value="CAA97300.1"/>
    <property type="molecule type" value="Genomic_DNA"/>
</dbReference>
<dbReference type="EMBL" id="BK006941">
    <property type="protein sequence ID" value="DAA08358.1"/>
    <property type="molecule type" value="Genomic_DNA"/>
</dbReference>
<dbReference type="PIR" id="S64603">
    <property type="entry name" value="S64603"/>
</dbReference>
<dbReference type="RefSeq" id="NP_011786.1">
    <property type="nucleotide sequence ID" value="NM_001181399.1"/>
</dbReference>
<dbReference type="PDB" id="7UQI">
    <property type="method" value="EM"/>
    <property type="resolution" value="3.80 A"/>
    <property type="chains" value="A/B/C/D/E/F/G/H/I=1-1379"/>
</dbReference>
<dbReference type="PDB" id="7UQJ">
    <property type="method" value="EM"/>
    <property type="resolution" value="3.00 A"/>
    <property type="chains" value="A/B/C/D/E/F=1-1379"/>
</dbReference>
<dbReference type="PDB" id="7UQK">
    <property type="method" value="EM"/>
    <property type="resolution" value="3.10 A"/>
    <property type="chains" value="A/B/C/D/E/F/G=1-1379"/>
</dbReference>
<dbReference type="PDBsum" id="7UQI"/>
<dbReference type="PDBsum" id="7UQJ"/>
<dbReference type="PDBsum" id="7UQK"/>
<dbReference type="EMDB" id="EMD-26695"/>
<dbReference type="EMDB" id="EMD-26696"/>
<dbReference type="EMDB" id="EMD-26697"/>
<dbReference type="EMDB" id="EMD-28815"/>
<dbReference type="SMR" id="P40340"/>
<dbReference type="BioGRID" id="33519">
    <property type="interactions" value="619"/>
</dbReference>
<dbReference type="DIP" id="DIP-6557N"/>
<dbReference type="FunCoup" id="P40340">
    <property type="interactions" value="933"/>
</dbReference>
<dbReference type="IntAct" id="P40340">
    <property type="interactions" value="113"/>
</dbReference>
<dbReference type="MINT" id="P40340"/>
<dbReference type="STRING" id="4932.YGR270W"/>
<dbReference type="GlyGen" id="P40340">
    <property type="glycosylation" value="1 site"/>
</dbReference>
<dbReference type="iPTMnet" id="P40340"/>
<dbReference type="PaxDb" id="4932-YGR270W"/>
<dbReference type="PeptideAtlas" id="P40340"/>
<dbReference type="EnsemblFungi" id="YGR270W_mRNA">
    <property type="protein sequence ID" value="YGR270W"/>
    <property type="gene ID" value="YGR270W"/>
</dbReference>
<dbReference type="GeneID" id="853186"/>
<dbReference type="KEGG" id="sce:YGR270W"/>
<dbReference type="AGR" id="SGD:S000003502"/>
<dbReference type="SGD" id="S000003502">
    <property type="gene designation" value="YTA7"/>
</dbReference>
<dbReference type="VEuPathDB" id="FungiDB:YGR270W"/>
<dbReference type="eggNOG" id="KOG0732">
    <property type="taxonomic scope" value="Eukaryota"/>
</dbReference>
<dbReference type="GeneTree" id="ENSGT00550000074694"/>
<dbReference type="HOGENOM" id="CLU_000536_6_1_1"/>
<dbReference type="InParanoid" id="P40340"/>
<dbReference type="OMA" id="NAQMGIE"/>
<dbReference type="OrthoDB" id="5421at2759"/>
<dbReference type="BioCyc" id="YEAST:G3O-30936-MONOMER"/>
<dbReference type="BioGRID-ORCS" id="853186">
    <property type="hits" value="0 hits in 10 CRISPR screens"/>
</dbReference>
<dbReference type="PRO" id="PR:P40340"/>
<dbReference type="Proteomes" id="UP000002311">
    <property type="component" value="Chromosome VII"/>
</dbReference>
<dbReference type="RNAct" id="P40340">
    <property type="molecule type" value="protein"/>
</dbReference>
<dbReference type="GO" id="GO:0000785">
    <property type="term" value="C:chromatin"/>
    <property type="evidence" value="ECO:0000314"/>
    <property type="project" value="UniProtKB"/>
</dbReference>
<dbReference type="GO" id="GO:0005694">
    <property type="term" value="C:chromosome"/>
    <property type="evidence" value="ECO:0000314"/>
    <property type="project" value="UniProtKB"/>
</dbReference>
<dbReference type="GO" id="GO:0000775">
    <property type="term" value="C:chromosome, centromeric region"/>
    <property type="evidence" value="ECO:0000314"/>
    <property type="project" value="UniProtKB"/>
</dbReference>
<dbReference type="GO" id="GO:0005829">
    <property type="term" value="C:cytosol"/>
    <property type="evidence" value="ECO:0000314"/>
    <property type="project" value="SGD"/>
</dbReference>
<dbReference type="GO" id="GO:0005634">
    <property type="term" value="C:nucleus"/>
    <property type="evidence" value="ECO:0000314"/>
    <property type="project" value="SGD"/>
</dbReference>
<dbReference type="GO" id="GO:0005524">
    <property type="term" value="F:ATP binding"/>
    <property type="evidence" value="ECO:0007669"/>
    <property type="project" value="UniProtKB-KW"/>
</dbReference>
<dbReference type="GO" id="GO:0016887">
    <property type="term" value="F:ATP hydrolysis activity"/>
    <property type="evidence" value="ECO:0000315"/>
    <property type="project" value="SGD"/>
</dbReference>
<dbReference type="GO" id="GO:0140658">
    <property type="term" value="F:ATP-dependent chromatin remodeler activity"/>
    <property type="evidence" value="ECO:0000314"/>
    <property type="project" value="SGD"/>
</dbReference>
<dbReference type="GO" id="GO:0140674">
    <property type="term" value="F:ATP-dependent histone chaperone activity"/>
    <property type="evidence" value="ECO:0000316"/>
    <property type="project" value="UniProtKB"/>
</dbReference>
<dbReference type="GO" id="GO:0003682">
    <property type="term" value="F:chromatin binding"/>
    <property type="evidence" value="ECO:0000314"/>
    <property type="project" value="SGD"/>
</dbReference>
<dbReference type="GO" id="GO:0042393">
    <property type="term" value="F:histone binding"/>
    <property type="evidence" value="ECO:0000314"/>
    <property type="project" value="SGD"/>
</dbReference>
<dbReference type="GO" id="GO:0034080">
    <property type="term" value="P:CENP-A containing chromatin assembly"/>
    <property type="evidence" value="ECO:0000316"/>
    <property type="project" value="UniProtKB"/>
</dbReference>
<dbReference type="GO" id="GO:0006325">
    <property type="term" value="P:chromatin organization"/>
    <property type="evidence" value="ECO:0000315"/>
    <property type="project" value="UniProtKB"/>
</dbReference>
<dbReference type="GO" id="GO:0006338">
    <property type="term" value="P:chromatin remodeling"/>
    <property type="evidence" value="ECO:0000315"/>
    <property type="project" value="UniProtKB"/>
</dbReference>
<dbReference type="GO" id="GO:0006261">
    <property type="term" value="P:DNA-templated DNA replication"/>
    <property type="evidence" value="ECO:0000314"/>
    <property type="project" value="SGD"/>
</dbReference>
<dbReference type="GO" id="GO:0000122">
    <property type="term" value="P:negative regulation of transcription by RNA polymerase II"/>
    <property type="evidence" value="ECO:0000315"/>
    <property type="project" value="SGD"/>
</dbReference>
<dbReference type="GO" id="GO:0006334">
    <property type="term" value="P:nucleosome assembly"/>
    <property type="evidence" value="ECO:0000318"/>
    <property type="project" value="GO_Central"/>
</dbReference>
<dbReference type="GO" id="GO:0006337">
    <property type="term" value="P:nucleosome disassembly"/>
    <property type="evidence" value="ECO:0000314"/>
    <property type="project" value="SGD"/>
</dbReference>
<dbReference type="GO" id="GO:2000219">
    <property type="term" value="P:positive regulation of invasive growth in response to glucose limitation"/>
    <property type="evidence" value="ECO:0000315"/>
    <property type="project" value="SGD"/>
</dbReference>
<dbReference type="GO" id="GO:0045944">
    <property type="term" value="P:positive regulation of transcription by RNA polymerase II"/>
    <property type="evidence" value="ECO:0000314"/>
    <property type="project" value="UniProtKB"/>
</dbReference>
<dbReference type="GO" id="GO:0045815">
    <property type="term" value="P:transcription initiation-coupled chromatin remodeling"/>
    <property type="evidence" value="ECO:0000318"/>
    <property type="project" value="GO_Central"/>
</dbReference>
<dbReference type="CDD" id="cd05491">
    <property type="entry name" value="Bromo_TBP7_like"/>
    <property type="match status" value="1"/>
</dbReference>
<dbReference type="CDD" id="cd19517">
    <property type="entry name" value="RecA-like_Yta7-like"/>
    <property type="match status" value="1"/>
</dbReference>
<dbReference type="FunFam" id="3.40.50.300:FF:001218">
    <property type="entry name" value="AAA family ATPase, putative"/>
    <property type="match status" value="1"/>
</dbReference>
<dbReference type="FunFam" id="1.10.8.60:FF:000016">
    <property type="entry name" value="ATPase family AAA domain-containing protein 2B"/>
    <property type="match status" value="1"/>
</dbReference>
<dbReference type="FunFam" id="3.40.50.300:FF:000061">
    <property type="entry name" value="ATPase family, AAA domain-containing 2"/>
    <property type="match status" value="1"/>
</dbReference>
<dbReference type="Gene3D" id="1.10.8.60">
    <property type="match status" value="1"/>
</dbReference>
<dbReference type="Gene3D" id="1.20.920.10">
    <property type="entry name" value="Bromodomain-like"/>
    <property type="match status" value="1"/>
</dbReference>
<dbReference type="Gene3D" id="3.40.50.300">
    <property type="entry name" value="P-loop containing nucleotide triphosphate hydrolases"/>
    <property type="match status" value="2"/>
</dbReference>
<dbReference type="InterPro" id="IPR003593">
    <property type="entry name" value="AAA+_ATPase"/>
</dbReference>
<dbReference type="InterPro" id="IPR041569">
    <property type="entry name" value="AAA_lid_3"/>
</dbReference>
<dbReference type="InterPro" id="IPR045199">
    <property type="entry name" value="ATAD2-like"/>
</dbReference>
<dbReference type="InterPro" id="IPR003959">
    <property type="entry name" value="ATPase_AAA_core"/>
</dbReference>
<dbReference type="InterPro" id="IPR003960">
    <property type="entry name" value="ATPase_AAA_CS"/>
</dbReference>
<dbReference type="InterPro" id="IPR001487">
    <property type="entry name" value="Bromodomain"/>
</dbReference>
<dbReference type="InterPro" id="IPR036427">
    <property type="entry name" value="Bromodomain-like_sf"/>
</dbReference>
<dbReference type="InterPro" id="IPR027417">
    <property type="entry name" value="P-loop_NTPase"/>
</dbReference>
<dbReference type="PANTHER" id="PTHR23069">
    <property type="entry name" value="AAA DOMAIN-CONTAINING"/>
    <property type="match status" value="1"/>
</dbReference>
<dbReference type="PANTHER" id="PTHR23069:SF0">
    <property type="entry name" value="TAT-BINDING HOMOLOG 7"/>
    <property type="match status" value="1"/>
</dbReference>
<dbReference type="Pfam" id="PF00004">
    <property type="entry name" value="AAA"/>
    <property type="match status" value="2"/>
</dbReference>
<dbReference type="Pfam" id="PF17862">
    <property type="entry name" value="AAA_lid_3"/>
    <property type="match status" value="1"/>
</dbReference>
<dbReference type="SMART" id="SM00382">
    <property type="entry name" value="AAA"/>
    <property type="match status" value="1"/>
</dbReference>
<dbReference type="SUPFAM" id="SSF47370">
    <property type="entry name" value="Bromodomain"/>
    <property type="match status" value="1"/>
</dbReference>
<dbReference type="SUPFAM" id="SSF52540">
    <property type="entry name" value="P-loop containing nucleoside triphosphate hydrolases"/>
    <property type="match status" value="2"/>
</dbReference>
<dbReference type="PROSITE" id="PS00674">
    <property type="entry name" value="AAA"/>
    <property type="match status" value="1"/>
</dbReference>
<dbReference type="PROSITE" id="PS50014">
    <property type="entry name" value="BROMODOMAIN_2"/>
    <property type="match status" value="1"/>
</dbReference>
<name>ATAD2_YEAST</name>
<comment type="function">
    <text evidence="6 7 8 9 10">Functions as an ATP-dependent nucleosome disassembly factor that helps evict canonical histone H3 from the 5'-end of genes upon their induction (PubMed:25406467). Also contributes to kinetochore assembly by cooperating with SCM3 to load the histone H3 variant CSE4/CENP-A at centromeres (PubMed:32079723). Provides a chromatin boundary function at the 5'-end of genes that restricts access by RTT106 and thus prevents ectopic spreading of repressive chromatin into coding regions (PubMed:19683497, PubMed:22156209, PubMed:25406467). Also prevents heterochromatin spreading downstream of the silent mating-type locus HMR, this function is independent of the tRNA boundary element (PubMed:16079223). Contributes to appropriate cell cycle regulation of histone gene expression by recruiting RNA polymerase II to histone genes, and subsequent CDK1- and casein kinase II-dependent eviction from chromatin is required to promote transcriptional elongation (PubMed:22156209).</text>
</comment>
<comment type="subunit">
    <text evidence="6 8 10">Interacts with CSE4/CENP-A (PubMed:32079723). Interacts with SCM3 (PubMed:32079723). Interacts with SPT16 (PubMed:22156209). Interacts with POB3 (PubMed:22156209). Interacts with the casein kinase II complex subunits CKA1, CKA2, CKB1 and CKB2 (PubMed:22156209). Interacts with RNA polymerase II (PubMed:22156209). Interacts (via Bromo domain) with histone H3 (PubMed:16079223). Interacts (via Bromo domain) with histone H4 (PubMed:16079223).</text>
</comment>
<comment type="subcellular location">
    <subcellularLocation>
        <location evidence="10">Chromosome</location>
        <location evidence="10">Centromere</location>
    </subcellularLocation>
    <subcellularLocation>
        <location evidence="10">Nucleus</location>
    </subcellularLocation>
    <subcellularLocation>
        <location evidence="7 8 9">Chromosome</location>
    </subcellularLocation>
    <text evidence="7 8 9">Binds near the 5'-end within protein-coding genes (PubMed:19683497, PubMed:25406467). Localizes to the negative regulatory element NEG and promoter of the HTA1 gene during G2 and M-phase, and its open reading frame during G1/S (PubMed:19683497, PubMed:22156209).</text>
</comment>
<comment type="PTM">
    <text evidence="8">Phosphorylated by CDK1 and casein kinase II during S-phase, which leads to its eviction from histone gene promoters and promotes histone gene transcription.</text>
</comment>
<comment type="disruption phenotype">
    <text evidence="6 7 8 9 10">Decreases the level of CSE4/CENP-A at centromeres (PubMed:32079723). Decreases internucleosome spacing at protein-coding genes (PubMed:25406467). Decreases localization of RNA polymerase II to the histone HTA1-HTB1 gene locus during the G1/S transition (PubMed:22156209). Decreases HTA1 RNA level (PubMed:19683497). Heterochromatin spreading downstream of the silent mating-type locus HMR (PubMed:16079223). Decreases cell population growth; simultaneous disruption of proteins required for maintaining centromere and kinetochore function, including CLH4 and CBF1, enhances the growth defect (PubMed:32079723).</text>
</comment>
<comment type="miscellaneous">
    <text evidence="5">Present with 172 molecules/cell in log phase SD medium.</text>
</comment>
<comment type="similarity">
    <text evidence="12">Belongs to the AAA ATPase family.</text>
</comment>
<sequence>MARNLRNRRGSDVEDASNAKVGYETQIKDENGIIHTTTRSLRKINYAEIEKVFDFLEDDQVMDKDETPVDVTSDEHHNNNQKGDDEDDDVDLVSPHENARTNEELTNERNLRKRKAHDPEEDDESFHEEDVDDDEEEEEADEFEDEYLDEDSKDNNRRRRAADRKFVVPDPDDDEEYDEDDEEGDRISHSASSKRLKRANSRRTRSSRHPETPPPVRRALRSRTRHSRTSNEENDDENDNSRNEALTLADEIRELQEDSPIREKRFLRERTKPVNYKLPPPLTASNAEEFIDKNNNALSFHNPSPARRGRGGWNASQNSGPTRRLFPTGGPFGGNDVTTIFGKNTNFYNQVPSAFSDNNNNKLILDSDSSDDEILPLGVTPKTKKENTQKKKKKKPEIADLDPLGVDMNVNFDDIGGLDNYIDQLKEMVALPLLYPELYQNFNITPPRGVLFHGPPGTGKTLMARALAASCSSDERKITFFMRKGADILSKWVGEAERQLRLLFEEAKKHQPSIIFFDEIDGLAPVRSSKQEQIHASIVSTLLALMDGMDNRGQVIVIGATNRPDAVDPALRRPGRFDREFYFPLPDVKARFKILQIQTRKWSSPLSTNFIDKLAFLTKGYGGADLRSLCTEAALISIQRSFPQIYRSNDKLLVDPSKIKVKVSDFMLALKKIVPSSARSTGSSPQPLPELIKPLLADQLNNLKNKLDYMLNIKDTTFQRNTSLLQNFIDYEEYSGEEEEHDKYGGNEDTSSFRSYEFFESMAESQICKPRLLINGPKGNGQQYVGAAILNYLEEFNVQNLDLASLVSESSRTIEAAVVQSFMEAKKRQPSVVFIPNLDIWINTIPENVILVLSGLFRSLQSNEKILLLCLAENLDISEVKNGILSDFAFDKNIFQLHKPSKENITRYFSNLIELLKTKPSDIPMKKRRVKPLPELQKVTSNAAPTNFDENGEPLSEKVVLRRKLKSFQHQDMRLKNVLKIKLSGLMDLFKNRYKRFRKPPIDDAFLVHLFEPETSNDPNWQPAYIKDENMILEVSTGRKFFNMDLDIVEERLWNGYYSEPKQFLKDIELIYRDANTIGDRERVIKASEMFANAQMGIEEISTPDFIQECKATRQRDLERQELFLEDEEKRAAMELEAKEQSQENILQEPDLKDNKANEFGVAAGNQLQAQLQTTINTASIVNNSEVPQPIDTNLYKKEIPAAIPSAVDKEKAVIPEDSGANEEYTTELIQATCTSEITTDDDERARKEPKENEDSLQTQVTEENFSKIDANTNNINHVKEIQSVNKPNSLHETVEKRERSPIPKEVVEPEQGKKSDKELILTPEQIKKVSACLIEHCQNFTVSQLEDVHSSVAKIIWKSKSAWDKTGTVDEIIKFLSE</sequence>
<feature type="initiator methionine" description="Removed" evidence="15">
    <location>
        <position position="1"/>
    </location>
</feature>
<feature type="chain" id="PRO_0000084771" description="ATPase histone chaperone YTA7">
    <location>
        <begin position="2"/>
        <end position="1379"/>
    </location>
</feature>
<feature type="domain" description="Bromo" evidence="3">
    <location>
        <begin position="974"/>
        <end position="1101"/>
    </location>
</feature>
<feature type="region of interest" description="Disordered" evidence="4">
    <location>
        <begin position="1"/>
        <end position="39"/>
    </location>
</feature>
<feature type="region of interest" description="Disordered" evidence="4">
    <location>
        <begin position="54"/>
        <end position="243"/>
    </location>
</feature>
<feature type="region of interest" description="Disordered" evidence="4">
    <location>
        <begin position="302"/>
        <end position="330"/>
    </location>
</feature>
<feature type="region of interest" description="Disordered" evidence="4">
    <location>
        <begin position="375"/>
        <end position="396"/>
    </location>
</feature>
<feature type="region of interest" description="AAA-ATPase; required for its chromatin boundary function" evidence="13">
    <location>
        <begin position="450"/>
        <end position="578"/>
    </location>
</feature>
<feature type="region of interest" description="Disordered" evidence="4">
    <location>
        <begin position="1233"/>
        <end position="1274"/>
    </location>
</feature>
<feature type="region of interest" description="Disordered" evidence="4">
    <location>
        <begin position="1291"/>
        <end position="1316"/>
    </location>
</feature>
<feature type="compositionally biased region" description="Basic and acidic residues" evidence="4">
    <location>
        <begin position="61"/>
        <end position="78"/>
    </location>
</feature>
<feature type="compositionally biased region" description="Basic and acidic residues" evidence="4">
    <location>
        <begin position="97"/>
        <end position="110"/>
    </location>
</feature>
<feature type="compositionally biased region" description="Acidic residues" evidence="4">
    <location>
        <begin position="119"/>
        <end position="152"/>
    </location>
</feature>
<feature type="compositionally biased region" description="Acidic residues" evidence="4">
    <location>
        <begin position="170"/>
        <end position="184"/>
    </location>
</feature>
<feature type="compositionally biased region" description="Basic residues" evidence="4">
    <location>
        <begin position="192"/>
        <end position="207"/>
    </location>
</feature>
<feature type="compositionally biased region" description="Basic residues" evidence="4">
    <location>
        <begin position="218"/>
        <end position="228"/>
    </location>
</feature>
<feature type="compositionally biased region" description="Basic and acidic residues" evidence="4">
    <location>
        <begin position="1244"/>
        <end position="1254"/>
    </location>
</feature>
<feature type="compositionally biased region" description="Polar residues" evidence="4">
    <location>
        <begin position="1256"/>
        <end position="1274"/>
    </location>
</feature>
<feature type="compositionally biased region" description="Basic and acidic residues" evidence="4">
    <location>
        <begin position="1293"/>
        <end position="1316"/>
    </location>
</feature>
<feature type="binding site" evidence="2">
    <location>
        <begin position="454"/>
        <end position="461"/>
    </location>
    <ligand>
        <name>ATP</name>
        <dbReference type="ChEBI" id="CHEBI:30616"/>
    </ligand>
</feature>
<feature type="modified residue" description="N-acetylalanine" evidence="15">
    <location>
        <position position="2"/>
    </location>
</feature>
<feature type="modified residue" description="Phosphoserine" evidence="15 17 18">
    <location>
        <position position="11"/>
    </location>
</feature>
<feature type="modified residue" description="Phosphoserine" evidence="15">
    <location>
        <position position="17"/>
    </location>
</feature>
<feature type="modified residue" description="Phosphoserine" evidence="16">
    <location>
        <position position="94"/>
    </location>
</feature>
<feature type="modified residue" description="Phosphothreonine" evidence="17">
    <location>
        <position position="212"/>
    </location>
</feature>
<feature type="modified residue" description="Phosphothreonine" evidence="18">
    <location>
        <position position="229"/>
    </location>
</feature>
<feature type="modified residue" description="Phosphoserine" evidence="17">
    <location>
        <position position="241"/>
    </location>
</feature>
<feature type="modified residue" description="Phosphoserine" evidence="16 17 18">
    <location>
        <position position="259"/>
    </location>
</feature>
<feature type="modified residue" description="Phosphoserine" evidence="17">
    <location>
        <position position="285"/>
    </location>
</feature>
<feature type="modified residue" description="Phosphoserine" evidence="18">
    <location>
        <position position="367"/>
    </location>
</feature>
<feature type="modified residue" description="Phosphoserine" evidence="18">
    <location>
        <position position="369"/>
    </location>
</feature>
<feature type="modified residue" description="Phosphoserine" evidence="18">
    <location>
        <position position="370"/>
    </location>
</feature>
<feature type="modified residue" description="Phosphoserine" evidence="18">
    <location>
        <position position="735"/>
    </location>
</feature>
<feature type="modified residue" description="Phosphoserine" evidence="17 18">
    <location>
        <position position="1142"/>
    </location>
</feature>
<feature type="modified residue" description="Phosphoserine" evidence="17 18">
    <location>
        <position position="1256"/>
    </location>
</feature>
<feature type="mutagenesis site" description="Severely decreases phosphorylation, causes a G2/M transition delay, and leads to sensitivity to 6-azauracil (impairs transcriptional elongation); when associated with A-67; A-94; A-212; A-230; A-241; A-259; A-285; A-304; A-369; A-370; A-380 and A-445." evidence="8">
    <original>S</original>
    <variation>A</variation>
    <location>
        <position position="11"/>
    </location>
</feature>
<feature type="mutagenesis site" description="Severely decreases phosphorylation, causes a G2/M transition delay, and leads to sensitivity to 6-azauracil (impairs transcriptional elongation); when associated with A-11; A-94; A-212; A-230; A-241; A-259; A-285; A-304; A-369; A-370; A-380 and A-445." evidence="8">
    <original>T</original>
    <variation>A</variation>
    <location>
        <position position="67"/>
    </location>
</feature>
<feature type="mutagenesis site" description="Severely decreases phosphorylation, causes a G2/M transition delay, and leads to sensitivity to 6-azauracil (impairs transcriptional elongation); when associated with A-11; A-67; A-212; A-230; A-241; A-259; A-285; A-304; A-369; A-370; A-380 and A-445." evidence="8">
    <original>S</original>
    <variation>A</variation>
    <location>
        <position position="94"/>
    </location>
</feature>
<feature type="mutagenesis site" description="Severely decreases phosphorylation, causes a G2/M transition delay, and leads to sensitivity to 6-azauracil (impairs transcriptional elongation); when associated with A-11; A-67; A-94; A-230; A-241; A-259; A-285; A-304; A-369; A-370; A-380 and A-445." evidence="8">
    <original>T</original>
    <variation>A</variation>
    <location>
        <position position="212"/>
    </location>
</feature>
<feature type="mutagenesis site" description="Severely decreases phosphorylation, causes a G2/M transition delay, and leads to sensitivity to 6-azauracil (impairs transcriptional elongation); when associated with A-11; A-67; A-94; A-212; A-241; A-259; A-285; A-304; A-369; A-370; A-380 and A-445." evidence="8">
    <original>S</original>
    <variation>A</variation>
    <location>
        <position position="230"/>
    </location>
</feature>
<feature type="mutagenesis site" description="Severely decreases phosphorylation, causes a G2/M transition delay, and leads to sensitivity to 6-azauracil (impairs transcriptional elongation); when associated with A-11; A-67; A-94; A-212; A-230; A-259; A-285; A-304; A-369; A-370; A-380 and A-445." evidence="8">
    <original>S</original>
    <variation>A</variation>
    <location>
        <position position="241"/>
    </location>
</feature>
<feature type="mutagenesis site" description="Severely decreases phosphorylation, causes a G2/M transition delay, and leads to sensitivity to 6-azauracil (impairs transcriptional elongation); when associated with A-11; A-67; A-94; A-212; A-230; A-241; A-285; A-304; A-369; A-370; A-380 and A-445." evidence="8">
    <original>S</original>
    <variation>A</variation>
    <location>
        <position position="259"/>
    </location>
</feature>
<feature type="mutagenesis site" description="Severely decreases phosphorylation, causes a G2/M transition delay, and leads to sensitivity to 6-azauracil (impairs transcriptional elongation); when associated with A-11; A-67; A-94; A-212; A-230; A-241; A-259; A-304; A-369; A-370; A-380 and A-445." evidence="8">
    <original>S</original>
    <variation>A</variation>
    <location>
        <position position="285"/>
    </location>
</feature>
<feature type="mutagenesis site" description="Severely decreases phosphorylation, causes a G2/M transition delay, and leads to sensitivity to 6-azauracil (impairs transcriptional elongation); when associated with A-11; A-67; A-94; A-212; A-230; A-241; A-259; A-285; A-369; A-370; A-380 and A-445." evidence="8">
    <original>S</original>
    <variation>A</variation>
    <location>
        <position position="304"/>
    </location>
</feature>
<feature type="mutagenesis site" description="Severely decreases phosphorylation, causes a G2/M transition delay, and leads to sensitivity to 6-azauracil (impairs transcriptional elongation); when associated with A-11; A-67; A-94; A-212; A-230; A-241; A-259; A-285; A-304; A-370; A-380 and A-445." evidence="8">
    <original>S</original>
    <variation>A</variation>
    <location>
        <position position="369"/>
    </location>
</feature>
<feature type="mutagenesis site" description="Severely decreases phosphorylation, causes a G2/M transition delay, and leads to sensitivity to 6-azauracil (impairs transcriptional elongation); when associated with A-11; A-67; A-94; A-212; A-230; A-241; A-259; A-285; A-304; A-369; A-380 and A-445." evidence="8">
    <original>S</original>
    <variation>A</variation>
    <location>
        <position position="370"/>
    </location>
</feature>
<feature type="mutagenesis site" description="Severely decreases phosphorylation, causes a G2/M transition delay, and leads to sensitivity to 6-azauracil (impairs transcriptional elongation); when associated with A-11; A-67; A-94; A-212; A-230; A-241; A-259; A-285; A-304; A-369; A-370 and A-445." evidence="8">
    <original>T</original>
    <variation>A</variation>
    <location>
        <position position="380"/>
    </location>
</feature>
<feature type="mutagenesis site" description="Severely decreases phosphorylation, causes a G2/M transition delay, and leads to sensitivity to 6-azauracil (impairs transcriptional elongation); when associated with A-11; A-67; A-94; A-212; A-230; A-241; A-259; A-285; A-304; A-369; A-370 and A-380." evidence="8">
    <original>T</original>
    <variation>A</variation>
    <location>
        <position position="445"/>
    </location>
</feature>
<feature type="mutagenesis site" description="Increases YTA7 binding to the HTA1 open reading frame outside of S-phase. Increases localization of RTT106 and RSC8 to the HTA1 gene locus. Increases nucleosome occupancy at core histone loci. Decreases transcription of HTA1." evidence="8">
    <original>K</original>
    <variation>A</variation>
    <location>
        <position position="460"/>
    </location>
</feature>
<feature type="sequence conflict" description="In Ref. 1; CAA56963." evidence="12" ref="1">
    <original>D</original>
    <variation>E</variation>
    <location>
        <position position="70"/>
    </location>
</feature>
<feature type="sequence conflict" description="In Ref. 1; CAA56963." evidence="12" ref="1">
    <original>S</original>
    <variation>N</variation>
    <location>
        <position position="241"/>
    </location>
</feature>
<feature type="sequence conflict" description="In Ref. 1; CAA56963." evidence="12" ref="1">
    <original>S</original>
    <variation>N</variation>
    <location>
        <position position="1016"/>
    </location>
</feature>
<feature type="sequence conflict" description="In Ref. 1; CAA56963." evidence="12" ref="1">
    <original>S</original>
    <variation>N</variation>
    <location>
        <position position="1142"/>
    </location>
</feature>
<feature type="sequence conflict" description="In Ref. 1; CAA56963." evidence="12" ref="1">
    <original>K</original>
    <variation>E</variation>
    <location>
        <position position="1153"/>
    </location>
</feature>
<feature type="sequence conflict" description="In Ref. 1; CAA56963." evidence="12" ref="1">
    <original>P</original>
    <variation>L</variation>
    <location>
        <position position="1250"/>
    </location>
</feature>
<feature type="sequence conflict" description="In Ref. 1; CAA56963." evidence="12" ref="1">
    <original>I</original>
    <variation>R</variation>
    <location>
        <position position="1276"/>
    </location>
</feature>
<feature type="sequence conflict" description="In Ref. 1; CAA56963." evidence="12" ref="1">
    <original>Q</original>
    <variation>P</variation>
    <location>
        <position position="1283"/>
    </location>
</feature>
<feature type="strand" evidence="20">
    <location>
        <begin position="331"/>
        <end position="333"/>
    </location>
</feature>
<feature type="helix" evidence="19">
    <location>
        <begin position="412"/>
        <end position="414"/>
    </location>
</feature>
<feature type="helix" evidence="19">
    <location>
        <begin position="419"/>
        <end position="426"/>
    </location>
</feature>
<feature type="turn" evidence="19">
    <location>
        <begin position="427"/>
        <end position="429"/>
    </location>
</feature>
<feature type="helix" evidence="19">
    <location>
        <begin position="430"/>
        <end position="434"/>
    </location>
</feature>
<feature type="helix" evidence="19">
    <location>
        <begin position="436"/>
        <end position="439"/>
    </location>
</feature>
<feature type="turn" evidence="19">
    <location>
        <begin position="440"/>
        <end position="443"/>
    </location>
</feature>
<feature type="strand" evidence="19">
    <location>
        <begin position="449"/>
        <end position="453"/>
    </location>
</feature>
<feature type="helix" evidence="19">
    <location>
        <begin position="460"/>
        <end position="468"/>
    </location>
</feature>
<feature type="strand" evidence="20">
    <location>
        <begin position="474"/>
        <end position="476"/>
    </location>
</feature>
<feature type="strand" evidence="19">
    <location>
        <begin position="479"/>
        <end position="483"/>
    </location>
</feature>
<feature type="helix" evidence="20">
    <location>
        <begin position="485"/>
        <end position="488"/>
    </location>
</feature>
<feature type="strand" evidence="20">
    <location>
        <begin position="491"/>
        <end position="494"/>
    </location>
</feature>
<feature type="helix" evidence="19">
    <location>
        <begin position="495"/>
        <end position="509"/>
    </location>
</feature>
<feature type="strand" evidence="19">
    <location>
        <begin position="510"/>
        <end position="517"/>
    </location>
</feature>
<feature type="helix" evidence="19">
    <location>
        <begin position="520"/>
        <end position="523"/>
    </location>
</feature>
<feature type="strand" evidence="20">
    <location>
        <begin position="527"/>
        <end position="529"/>
    </location>
</feature>
<feature type="helix" evidence="19">
    <location>
        <begin position="536"/>
        <end position="545"/>
    </location>
</feature>
<feature type="turn" evidence="19">
    <location>
        <begin position="548"/>
        <end position="551"/>
    </location>
</feature>
<feature type="strand" evidence="19">
    <location>
        <begin position="554"/>
        <end position="562"/>
    </location>
</feature>
<feature type="helix" evidence="20">
    <location>
        <begin position="564"/>
        <end position="566"/>
    </location>
</feature>
<feature type="strand" evidence="19">
    <location>
        <begin position="571"/>
        <end position="573"/>
    </location>
</feature>
<feature type="turn" evidence="19">
    <location>
        <begin position="574"/>
        <end position="576"/>
    </location>
</feature>
<feature type="strand" evidence="19">
    <location>
        <begin position="579"/>
        <end position="582"/>
    </location>
</feature>
<feature type="helix" evidence="19">
    <location>
        <begin position="588"/>
        <end position="597"/>
    </location>
</feature>
<feature type="turn" evidence="19">
    <location>
        <begin position="598"/>
        <end position="601"/>
    </location>
</feature>
<feature type="strand" evidence="19">
    <location>
        <begin position="602"/>
        <end position="604"/>
    </location>
</feature>
<feature type="helix" evidence="19">
    <location>
        <begin position="608"/>
        <end position="616"/>
    </location>
</feature>
<feature type="turn" evidence="19">
    <location>
        <begin position="617"/>
        <end position="620"/>
    </location>
</feature>
<feature type="helix" evidence="19">
    <location>
        <begin position="623"/>
        <end position="641"/>
    </location>
</feature>
<feature type="helix" evidence="19">
    <location>
        <begin position="643"/>
        <end position="646"/>
    </location>
</feature>
<feature type="helix" evidence="19">
    <location>
        <begin position="663"/>
        <end position="669"/>
    </location>
</feature>
<feature type="strand" evidence="19">
    <location>
        <begin position="670"/>
        <end position="672"/>
    </location>
</feature>
<feature type="strand" evidence="19">
    <location>
        <begin position="678"/>
        <end position="682"/>
    </location>
</feature>
<feature type="turn" evidence="19">
    <location>
        <begin position="690"/>
        <end position="692"/>
    </location>
</feature>
<feature type="helix" evidence="19">
    <location>
        <begin position="693"/>
        <end position="711"/>
    </location>
</feature>
<feature type="turn" evidence="19">
    <location>
        <begin position="713"/>
        <end position="715"/>
    </location>
</feature>
<feature type="helix" evidence="19">
    <location>
        <begin position="716"/>
        <end position="719"/>
    </location>
</feature>
<feature type="helix" evidence="19">
    <location>
        <begin position="724"/>
        <end position="730"/>
    </location>
</feature>
<feature type="helix" evidence="19">
    <location>
        <begin position="758"/>
        <end position="764"/>
    </location>
</feature>
<feature type="strand" evidence="19">
    <location>
        <begin position="771"/>
        <end position="777"/>
    </location>
</feature>
<feature type="helix" evidence="19">
    <location>
        <begin position="782"/>
        <end position="792"/>
    </location>
</feature>
<feature type="turn" evidence="19">
    <location>
        <begin position="793"/>
        <end position="795"/>
    </location>
</feature>
<feature type="strand" evidence="19">
    <location>
        <begin position="798"/>
        <end position="800"/>
    </location>
</feature>
<feature type="helix" evidence="19">
    <location>
        <begin position="803"/>
        <end position="806"/>
    </location>
</feature>
<feature type="strand" evidence="19">
    <location>
        <begin position="810"/>
        <end position="812"/>
    </location>
</feature>
<feature type="helix" evidence="19">
    <location>
        <begin position="814"/>
        <end position="827"/>
    </location>
</feature>
<feature type="strand" evidence="19">
    <location>
        <begin position="828"/>
        <end position="836"/>
    </location>
</feature>
<feature type="helix" evidence="19">
    <location>
        <begin position="838"/>
        <end position="844"/>
    </location>
</feature>
<feature type="helix" evidence="19">
    <location>
        <begin position="847"/>
        <end position="858"/>
    </location>
</feature>
<feature type="strand" evidence="19">
    <location>
        <begin position="866"/>
        <end position="874"/>
    </location>
</feature>
<feature type="helix" evidence="19">
    <location>
        <begin position="877"/>
        <end position="882"/>
    </location>
</feature>
<feature type="strand" evidence="19">
    <location>
        <begin position="886"/>
        <end position="888"/>
    </location>
</feature>
<feature type="strand" evidence="19">
    <location>
        <begin position="894"/>
        <end position="896"/>
    </location>
</feature>
<feature type="helix" evidence="19">
    <location>
        <begin position="902"/>
        <end position="908"/>
    </location>
</feature>
<feature type="helix" evidence="19">
    <location>
        <begin position="910"/>
        <end position="916"/>
    </location>
</feature>
<feature type="turn" evidence="20">
    <location>
        <begin position="920"/>
        <end position="922"/>
    </location>
</feature>
<feature type="helix" evidence="20">
    <location>
        <begin position="956"/>
        <end position="993"/>
    </location>
</feature>
<feature type="helix" evidence="20">
    <location>
        <begin position="1005"/>
        <end position="1008"/>
    </location>
</feature>
<feature type="turn" evidence="20">
    <location>
        <begin position="1009"/>
        <end position="1011"/>
    </location>
</feature>
<feature type="strand" evidence="20">
    <location>
        <begin position="1025"/>
        <end position="1027"/>
    </location>
</feature>
<feature type="strand" evidence="20">
    <location>
        <begin position="1032"/>
        <end position="1034"/>
    </location>
</feature>
<feature type="turn" evidence="20">
    <location>
        <begin position="1035"/>
        <end position="1037"/>
    </location>
</feature>
<feature type="helix" evidence="20">
    <location>
        <begin position="1050"/>
        <end position="1055"/>
    </location>
</feature>
<feature type="helix" evidence="20">
    <location>
        <begin position="1061"/>
        <end position="1077"/>
    </location>
</feature>
<feature type="helix" evidence="20">
    <location>
        <begin position="1081"/>
        <end position="1101"/>
    </location>
</feature>
<feature type="helix" evidence="20">
    <location>
        <begin position="1104"/>
        <end position="1130"/>
    </location>
</feature>
<feature type="helix" evidence="19">
    <location>
        <begin position="1324"/>
        <end position="1337"/>
    </location>
</feature>
<feature type="strand" evidence="20">
    <location>
        <begin position="1338"/>
        <end position="1340"/>
    </location>
</feature>
<feature type="helix" evidence="19">
    <location>
        <begin position="1343"/>
        <end position="1359"/>
    </location>
</feature>
<feature type="turn" evidence="19">
    <location>
        <begin position="1366"/>
        <end position="1369"/>
    </location>
</feature>
<feature type="helix" evidence="19">
    <location>
        <begin position="1370"/>
        <end position="1376"/>
    </location>
</feature>
<accession>P40340</accession>
<accession>D6VV47</accession>